<comment type="function">
    <text>Flagellin is the subunit protein which polymerizes to form the filaments of bacterial flagella.</text>
</comment>
<comment type="subcellular location">
    <subcellularLocation>
        <location>Secreted</location>
    </subcellularLocation>
    <subcellularLocation>
        <location>Bacterial flagellum</location>
    </subcellularLocation>
</comment>
<comment type="miscellaneous">
    <text>Individual Salmonella serotypes usually alternate between the production of 2 antigenic forms of flagella, termed phase 1 and phase 2, each specified by separate structural genes.</text>
</comment>
<comment type="similarity">
    <text evidence="2">Belongs to the bacterial flagellin family.</text>
</comment>
<reference key="1">
    <citation type="journal article" date="1993" name="J. Bacteriol.">
        <title>Molecular analyses of the Salmonella g. flagellar antigen complex.</title>
        <authorList>
            <person name="Masten B.J."/>
            <person name="Joys T.M."/>
        </authorList>
    </citation>
    <scope>NUCLEOTIDE SEQUENCE [GENOMIC DNA]</scope>
    <source>
        <strain>CDC</strain>
    </source>
</reference>
<keyword id="KW-0975">Bacterial flagellum</keyword>
<keyword id="KW-0964">Secreted</keyword>
<proteinExistence type="inferred from homology"/>
<gene>
    <name type="primary">fliC</name>
</gene>
<accession>Q06981</accession>
<feature type="initiator methionine" description="Removed" evidence="1">
    <location>
        <position position="1"/>
    </location>
</feature>
<feature type="chain" id="PRO_0000182569" description="Flagellin">
    <location>
        <begin position="2"/>
        <end position="505"/>
    </location>
</feature>
<name>FLIC_SALMC</name>
<evidence type="ECO:0000250" key="1"/>
<evidence type="ECO:0000305" key="2"/>
<protein>
    <recommendedName>
        <fullName>Flagellin</fullName>
    </recommendedName>
    <alternativeName>
        <fullName>Phase 1-D flagellin</fullName>
    </alternativeName>
</protein>
<sequence>MAQVINTNSLSLLTQNNLNKSQSSLSSAIERLSSGLRINSAKDDAAGQAIANRFTSNIKGLTQASRNANDGISIAQTTEGALNEINNNLQRVRELSVQATNGTNSDSDLKSIQDEIQQRLEEIDRVSNQTQFNGVKVLSQDNQMKIQVGANDGETITIDLQKIDVKSLGLDGFNVNGPKEATVGDLKSSFKNVTGYDTYAAGADKYRVDINSGAVVTDAAAPDKVYVNAANGQLTTDDAENNTAVDLFKTTKSTAGTAEAKAIAGAIKGGKEGDTFDYKGVTFTIDTKTGDGGNGKVSTTINGEKVTLTVADIATGATNVNAATLQSSKNVYTSVVNGQFTFDDKTKNESAKLSDLEANNAVKGESKITVNGAEYTANATGDKITLAGKTMFIDKTASGVSTLINEDAAAAKKSTANPLASIDSALSKVDAVRSSLGAIQNRFDSAITNLGNTVTNLNSARSRIEDADYATEVSNMSKAQILQQAGTSVLAQANQVPQNVLSLLR</sequence>
<dbReference type="EMBL" id="Z15086">
    <property type="protein sequence ID" value="CAA78794.1"/>
    <property type="molecule type" value="Genomic_DNA"/>
</dbReference>
<dbReference type="PIR" id="S33191">
    <property type="entry name" value="S33191"/>
</dbReference>
<dbReference type="SMR" id="Q06981"/>
<dbReference type="GO" id="GO:0009288">
    <property type="term" value="C:bacterial-type flagellum"/>
    <property type="evidence" value="ECO:0007669"/>
    <property type="project" value="UniProtKB-SubCell"/>
</dbReference>
<dbReference type="GO" id="GO:0005576">
    <property type="term" value="C:extracellular region"/>
    <property type="evidence" value="ECO:0007669"/>
    <property type="project" value="UniProtKB-SubCell"/>
</dbReference>
<dbReference type="GO" id="GO:0005198">
    <property type="term" value="F:structural molecule activity"/>
    <property type="evidence" value="ECO:0007669"/>
    <property type="project" value="InterPro"/>
</dbReference>
<dbReference type="Gene3D" id="6.10.280.190">
    <property type="match status" value="1"/>
</dbReference>
<dbReference type="Gene3D" id="2.30.220.10">
    <property type="entry name" value="f41 fragment of flagellin, C-terminal domain"/>
    <property type="match status" value="1"/>
</dbReference>
<dbReference type="Gene3D" id="2.170.280.10">
    <property type="entry name" value="f41 fragment of flagellin, middle domain"/>
    <property type="match status" value="1"/>
</dbReference>
<dbReference type="Gene3D" id="1.20.1330.10">
    <property type="entry name" value="f41 fragment of flagellin, N-terminal domain"/>
    <property type="match status" value="1"/>
</dbReference>
<dbReference type="Gene3D" id="6.10.10.10">
    <property type="entry name" value="Flagellar export chaperone, C-terminal domain"/>
    <property type="match status" value="1"/>
</dbReference>
<dbReference type="InterPro" id="IPR001492">
    <property type="entry name" value="Flagellin"/>
</dbReference>
<dbReference type="InterPro" id="IPR046358">
    <property type="entry name" value="Flagellin_C"/>
</dbReference>
<dbReference type="InterPro" id="IPR042187">
    <property type="entry name" value="Flagellin_C_sub2"/>
</dbReference>
<dbReference type="InterPro" id="IPR001029">
    <property type="entry name" value="Flagellin_N"/>
</dbReference>
<dbReference type="PANTHER" id="PTHR42792">
    <property type="entry name" value="FLAGELLIN"/>
    <property type="match status" value="1"/>
</dbReference>
<dbReference type="PANTHER" id="PTHR42792:SF2">
    <property type="entry name" value="FLAGELLIN"/>
    <property type="match status" value="1"/>
</dbReference>
<dbReference type="Pfam" id="PF00700">
    <property type="entry name" value="Flagellin_C"/>
    <property type="match status" value="1"/>
</dbReference>
<dbReference type="Pfam" id="PF00669">
    <property type="entry name" value="Flagellin_N"/>
    <property type="match status" value="1"/>
</dbReference>
<dbReference type="Pfam" id="PF22370">
    <property type="entry name" value="FliC-like_3rd"/>
    <property type="match status" value="1"/>
</dbReference>
<dbReference type="PRINTS" id="PR00207">
    <property type="entry name" value="FLAGELLIN"/>
</dbReference>
<dbReference type="SUPFAM" id="SSF64518">
    <property type="entry name" value="Phase 1 flagellin"/>
    <property type="match status" value="1"/>
</dbReference>
<organism>
    <name type="scientific">Salmonella moscow</name>
    <dbReference type="NCBI Taxonomy" id="28146"/>
    <lineage>
        <taxon>Bacteria</taxon>
        <taxon>Pseudomonadati</taxon>
        <taxon>Pseudomonadota</taxon>
        <taxon>Gammaproteobacteria</taxon>
        <taxon>Enterobacterales</taxon>
        <taxon>Enterobacteriaceae</taxon>
        <taxon>Salmonella</taxon>
    </lineage>
</organism>